<protein>
    <recommendedName>
        <fullName evidence="1">Aspartate--tRNA ligase</fullName>
        <ecNumber evidence="1">6.1.1.12</ecNumber>
    </recommendedName>
    <alternativeName>
        <fullName evidence="1">Aspartyl-tRNA synthetase</fullName>
        <shortName evidence="1">AspRS</shortName>
    </alternativeName>
</protein>
<proteinExistence type="inferred from homology"/>
<gene>
    <name evidence="1" type="primary">aspS</name>
    <name type="ordered locus">ABC1577</name>
</gene>
<keyword id="KW-0030">Aminoacyl-tRNA synthetase</keyword>
<keyword id="KW-0067">ATP-binding</keyword>
<keyword id="KW-0963">Cytoplasm</keyword>
<keyword id="KW-0436">Ligase</keyword>
<keyword id="KW-0547">Nucleotide-binding</keyword>
<keyword id="KW-0648">Protein biosynthesis</keyword>
<keyword id="KW-1185">Reference proteome</keyword>
<organism>
    <name type="scientific">Shouchella clausii (strain KSM-K16)</name>
    <name type="common">Alkalihalobacillus clausii</name>
    <dbReference type="NCBI Taxonomy" id="66692"/>
    <lineage>
        <taxon>Bacteria</taxon>
        <taxon>Bacillati</taxon>
        <taxon>Bacillota</taxon>
        <taxon>Bacilli</taxon>
        <taxon>Bacillales</taxon>
        <taxon>Bacillaceae</taxon>
        <taxon>Shouchella</taxon>
    </lineage>
</organism>
<dbReference type="EC" id="6.1.1.12" evidence="1"/>
<dbReference type="EMBL" id="AP006627">
    <property type="protein sequence ID" value="BAD64112.1"/>
    <property type="molecule type" value="Genomic_DNA"/>
</dbReference>
<dbReference type="RefSeq" id="WP_011246421.1">
    <property type="nucleotide sequence ID" value="NC_006582.1"/>
</dbReference>
<dbReference type="SMR" id="Q5WHP3"/>
<dbReference type="STRING" id="66692.ABC1577"/>
<dbReference type="KEGG" id="bcl:ABC1577"/>
<dbReference type="eggNOG" id="COG0173">
    <property type="taxonomic scope" value="Bacteria"/>
</dbReference>
<dbReference type="HOGENOM" id="CLU_014330_3_2_9"/>
<dbReference type="OrthoDB" id="9802326at2"/>
<dbReference type="Proteomes" id="UP000001168">
    <property type="component" value="Chromosome"/>
</dbReference>
<dbReference type="GO" id="GO:0005737">
    <property type="term" value="C:cytoplasm"/>
    <property type="evidence" value="ECO:0007669"/>
    <property type="project" value="UniProtKB-SubCell"/>
</dbReference>
<dbReference type="GO" id="GO:0004815">
    <property type="term" value="F:aspartate-tRNA ligase activity"/>
    <property type="evidence" value="ECO:0007669"/>
    <property type="project" value="UniProtKB-UniRule"/>
</dbReference>
<dbReference type="GO" id="GO:0005524">
    <property type="term" value="F:ATP binding"/>
    <property type="evidence" value="ECO:0007669"/>
    <property type="project" value="UniProtKB-UniRule"/>
</dbReference>
<dbReference type="GO" id="GO:0140096">
    <property type="term" value="F:catalytic activity, acting on a protein"/>
    <property type="evidence" value="ECO:0007669"/>
    <property type="project" value="UniProtKB-ARBA"/>
</dbReference>
<dbReference type="GO" id="GO:0003676">
    <property type="term" value="F:nucleic acid binding"/>
    <property type="evidence" value="ECO:0007669"/>
    <property type="project" value="InterPro"/>
</dbReference>
<dbReference type="GO" id="GO:0016740">
    <property type="term" value="F:transferase activity"/>
    <property type="evidence" value="ECO:0007669"/>
    <property type="project" value="UniProtKB-ARBA"/>
</dbReference>
<dbReference type="GO" id="GO:0006422">
    <property type="term" value="P:aspartyl-tRNA aminoacylation"/>
    <property type="evidence" value="ECO:0007669"/>
    <property type="project" value="UniProtKB-UniRule"/>
</dbReference>
<dbReference type="CDD" id="cd00777">
    <property type="entry name" value="AspRS_core"/>
    <property type="match status" value="1"/>
</dbReference>
<dbReference type="CDD" id="cd04317">
    <property type="entry name" value="EcAspRS_like_N"/>
    <property type="match status" value="1"/>
</dbReference>
<dbReference type="Gene3D" id="3.30.930.10">
    <property type="entry name" value="Bira Bifunctional Protein, Domain 2"/>
    <property type="match status" value="1"/>
</dbReference>
<dbReference type="Gene3D" id="3.30.1360.30">
    <property type="entry name" value="GAD-like domain"/>
    <property type="match status" value="1"/>
</dbReference>
<dbReference type="Gene3D" id="2.40.50.140">
    <property type="entry name" value="Nucleic acid-binding proteins"/>
    <property type="match status" value="1"/>
</dbReference>
<dbReference type="HAMAP" id="MF_00044">
    <property type="entry name" value="Asp_tRNA_synth_type1"/>
    <property type="match status" value="1"/>
</dbReference>
<dbReference type="InterPro" id="IPR004364">
    <property type="entry name" value="Aa-tRNA-synt_II"/>
</dbReference>
<dbReference type="InterPro" id="IPR006195">
    <property type="entry name" value="aa-tRNA-synth_II"/>
</dbReference>
<dbReference type="InterPro" id="IPR045864">
    <property type="entry name" value="aa-tRNA-synth_II/BPL/LPL"/>
</dbReference>
<dbReference type="InterPro" id="IPR004524">
    <property type="entry name" value="Asp-tRNA-ligase_1"/>
</dbReference>
<dbReference type="InterPro" id="IPR047089">
    <property type="entry name" value="Asp-tRNA-ligase_1_N"/>
</dbReference>
<dbReference type="InterPro" id="IPR002312">
    <property type="entry name" value="Asp/Asn-tRNA-synth_IIb"/>
</dbReference>
<dbReference type="InterPro" id="IPR047090">
    <property type="entry name" value="AspRS_core"/>
</dbReference>
<dbReference type="InterPro" id="IPR004115">
    <property type="entry name" value="GAD-like_sf"/>
</dbReference>
<dbReference type="InterPro" id="IPR029351">
    <property type="entry name" value="GAD_dom"/>
</dbReference>
<dbReference type="InterPro" id="IPR012340">
    <property type="entry name" value="NA-bd_OB-fold"/>
</dbReference>
<dbReference type="InterPro" id="IPR004365">
    <property type="entry name" value="NA-bd_OB_tRNA"/>
</dbReference>
<dbReference type="NCBIfam" id="TIGR00459">
    <property type="entry name" value="aspS_bact"/>
    <property type="match status" value="1"/>
</dbReference>
<dbReference type="NCBIfam" id="NF001750">
    <property type="entry name" value="PRK00476.1"/>
    <property type="match status" value="1"/>
</dbReference>
<dbReference type="PANTHER" id="PTHR22594:SF5">
    <property type="entry name" value="ASPARTATE--TRNA LIGASE, MITOCHONDRIAL"/>
    <property type="match status" value="1"/>
</dbReference>
<dbReference type="PANTHER" id="PTHR22594">
    <property type="entry name" value="ASPARTYL/LYSYL-TRNA SYNTHETASE"/>
    <property type="match status" value="1"/>
</dbReference>
<dbReference type="Pfam" id="PF02938">
    <property type="entry name" value="GAD"/>
    <property type="match status" value="1"/>
</dbReference>
<dbReference type="Pfam" id="PF00152">
    <property type="entry name" value="tRNA-synt_2"/>
    <property type="match status" value="1"/>
</dbReference>
<dbReference type="Pfam" id="PF01336">
    <property type="entry name" value="tRNA_anti-codon"/>
    <property type="match status" value="1"/>
</dbReference>
<dbReference type="PRINTS" id="PR01042">
    <property type="entry name" value="TRNASYNTHASP"/>
</dbReference>
<dbReference type="SUPFAM" id="SSF55681">
    <property type="entry name" value="Class II aaRS and biotin synthetases"/>
    <property type="match status" value="1"/>
</dbReference>
<dbReference type="SUPFAM" id="SSF55261">
    <property type="entry name" value="GAD domain-like"/>
    <property type="match status" value="1"/>
</dbReference>
<dbReference type="SUPFAM" id="SSF50249">
    <property type="entry name" value="Nucleic acid-binding proteins"/>
    <property type="match status" value="1"/>
</dbReference>
<dbReference type="PROSITE" id="PS50862">
    <property type="entry name" value="AA_TRNA_LIGASE_II"/>
    <property type="match status" value="1"/>
</dbReference>
<sequence>MKRTHHCGQLDKTLAGQQVQLKGWVQRRRDLGQVIFLDLRDRSGIVQVVCSPEVSEEALKAADRVRNEYLVAVSGIVVERNEQAVNDKLATGAIEVHVRELEILNVSKSLPFQIEADTDAAEDVRLKYRYLDLRRPDMQEAFAMRHKIMKSVRDFLDADGYLEIETPMLTKSTPEGARDYLVPSRVHHGQFYALPQSPQIFKQLLMVSGFEKYFQIVRCFRDEDLRADRQPEFTQIDIETSFLDTEDILAMTEAMMEKLLKETHGLELKRPFSRMTYEEAMNRYGSDKPDTRFGMELIELSDVLKDTEFKVFKGALEAGGIIKGLTLKGGADKLSRKDIDALADFVKPYGAKGLAWLKVDDEGIKGPIAKFFNEAQTAALLAAMDAEAGDLLFFGADKKQVVFHALGALRLKFGKEFQLIDENAFHFLWVTDFPLVEYDEQAKRFVALHHPFTRPKAEDLDLMETHPEQVRAEAYDLVLNGFELGGGSQRIYERELQEKMFKLLGFSSEAAKEEFGFLLEAFDYGTPPHGGIALGLDRIVMLLARKSNLREVIAFPKTASASDLLTEAPNKVSVEQLIDLNLSIISKRS</sequence>
<reference key="1">
    <citation type="submission" date="2003-10" db="EMBL/GenBank/DDBJ databases">
        <title>The complete genome sequence of the alkaliphilic Bacillus clausii KSM-K16.</title>
        <authorList>
            <person name="Takaki Y."/>
            <person name="Kageyama Y."/>
            <person name="Shimamura S."/>
            <person name="Suzuki H."/>
            <person name="Nishi S."/>
            <person name="Hatada Y."/>
            <person name="Kawai S."/>
            <person name="Ito S."/>
            <person name="Horikoshi K."/>
        </authorList>
    </citation>
    <scope>NUCLEOTIDE SEQUENCE [LARGE SCALE GENOMIC DNA]</scope>
    <source>
        <strain>KSM-K16</strain>
    </source>
</reference>
<evidence type="ECO:0000255" key="1">
    <source>
        <dbReference type="HAMAP-Rule" id="MF_00044"/>
    </source>
</evidence>
<name>SYD_SHOC1</name>
<feature type="chain" id="PRO_0000110828" description="Aspartate--tRNA ligase">
    <location>
        <begin position="1"/>
        <end position="589"/>
    </location>
</feature>
<feature type="region of interest" description="Aspartate" evidence="1">
    <location>
        <begin position="199"/>
        <end position="202"/>
    </location>
</feature>
<feature type="binding site" evidence="1">
    <location>
        <position position="175"/>
    </location>
    <ligand>
        <name>L-aspartate</name>
        <dbReference type="ChEBI" id="CHEBI:29991"/>
    </ligand>
</feature>
<feature type="binding site" evidence="1">
    <location>
        <begin position="221"/>
        <end position="223"/>
    </location>
    <ligand>
        <name>ATP</name>
        <dbReference type="ChEBI" id="CHEBI:30616"/>
    </ligand>
</feature>
<feature type="binding site" evidence="1">
    <location>
        <position position="221"/>
    </location>
    <ligand>
        <name>L-aspartate</name>
        <dbReference type="ChEBI" id="CHEBI:29991"/>
    </ligand>
</feature>
<feature type="binding site" evidence="1">
    <location>
        <position position="230"/>
    </location>
    <ligand>
        <name>ATP</name>
        <dbReference type="ChEBI" id="CHEBI:30616"/>
    </ligand>
</feature>
<feature type="binding site" evidence="1">
    <location>
        <position position="449"/>
    </location>
    <ligand>
        <name>L-aspartate</name>
        <dbReference type="ChEBI" id="CHEBI:29991"/>
    </ligand>
</feature>
<feature type="binding site" evidence="1">
    <location>
        <position position="483"/>
    </location>
    <ligand>
        <name>ATP</name>
        <dbReference type="ChEBI" id="CHEBI:30616"/>
    </ligand>
</feature>
<feature type="binding site" evidence="1">
    <location>
        <position position="490"/>
    </location>
    <ligand>
        <name>L-aspartate</name>
        <dbReference type="ChEBI" id="CHEBI:29991"/>
    </ligand>
</feature>
<feature type="binding site" evidence="1">
    <location>
        <begin position="535"/>
        <end position="538"/>
    </location>
    <ligand>
        <name>ATP</name>
        <dbReference type="ChEBI" id="CHEBI:30616"/>
    </ligand>
</feature>
<comment type="function">
    <text evidence="1">Catalyzes the attachment of L-aspartate to tRNA(Asp) in a two-step reaction: L-aspartate is first activated by ATP to form Asp-AMP and then transferred to the acceptor end of tRNA(Asp).</text>
</comment>
<comment type="catalytic activity">
    <reaction evidence="1">
        <text>tRNA(Asp) + L-aspartate + ATP = L-aspartyl-tRNA(Asp) + AMP + diphosphate</text>
        <dbReference type="Rhea" id="RHEA:19649"/>
        <dbReference type="Rhea" id="RHEA-COMP:9660"/>
        <dbReference type="Rhea" id="RHEA-COMP:9678"/>
        <dbReference type="ChEBI" id="CHEBI:29991"/>
        <dbReference type="ChEBI" id="CHEBI:30616"/>
        <dbReference type="ChEBI" id="CHEBI:33019"/>
        <dbReference type="ChEBI" id="CHEBI:78442"/>
        <dbReference type="ChEBI" id="CHEBI:78516"/>
        <dbReference type="ChEBI" id="CHEBI:456215"/>
        <dbReference type="EC" id="6.1.1.12"/>
    </reaction>
</comment>
<comment type="subunit">
    <text evidence="1">Homodimer.</text>
</comment>
<comment type="subcellular location">
    <subcellularLocation>
        <location evidence="1">Cytoplasm</location>
    </subcellularLocation>
</comment>
<comment type="similarity">
    <text evidence="1">Belongs to the class-II aminoacyl-tRNA synthetase family. Type 1 subfamily.</text>
</comment>
<accession>Q5WHP3</accession>